<comment type="function">
    <text evidence="1 4 5">Stearoyl-CoA desaturase that utilizes O(2) and electrons from reduced cytochrome b5 to introduce the first double bond into saturated fatty acyl-CoA substrates. Catalyzes the insertion of a cis double bond at the delta-9 position into fatty acyl-CoA substrates including palmitoyl-CoA and stearoyl-CoA (PubMed:12815040, PubMed:16443825). Required for the biosynthesis of membrane phospholipids, cholesterol esters and triglycerides (By similarity).</text>
</comment>
<comment type="catalytic activity">
    <reaction evidence="4 5">
        <text>octadecanoyl-CoA + 2 Fe(II)-[cytochrome b5] + O2 + 2 H(+) = (9Z)-octadecenoyl-CoA + 2 Fe(III)-[cytochrome b5] + 2 H2O</text>
        <dbReference type="Rhea" id="RHEA:19721"/>
        <dbReference type="Rhea" id="RHEA-COMP:10438"/>
        <dbReference type="Rhea" id="RHEA-COMP:10439"/>
        <dbReference type="ChEBI" id="CHEBI:15377"/>
        <dbReference type="ChEBI" id="CHEBI:15378"/>
        <dbReference type="ChEBI" id="CHEBI:15379"/>
        <dbReference type="ChEBI" id="CHEBI:29033"/>
        <dbReference type="ChEBI" id="CHEBI:29034"/>
        <dbReference type="ChEBI" id="CHEBI:57387"/>
        <dbReference type="ChEBI" id="CHEBI:57394"/>
        <dbReference type="EC" id="1.14.19.1"/>
    </reaction>
</comment>
<comment type="catalytic activity">
    <reaction evidence="5">
        <text>hexadecanoyl-CoA + 2 Fe(II)-[cytochrome b5] + O2 + 2 H(+) = (9Z)-hexadecenoyl-CoA + 2 Fe(III)-[cytochrome b5] + 2 H2O</text>
        <dbReference type="Rhea" id="RHEA:36931"/>
        <dbReference type="Rhea" id="RHEA-COMP:10438"/>
        <dbReference type="Rhea" id="RHEA-COMP:10439"/>
        <dbReference type="ChEBI" id="CHEBI:15377"/>
        <dbReference type="ChEBI" id="CHEBI:15378"/>
        <dbReference type="ChEBI" id="CHEBI:15379"/>
        <dbReference type="ChEBI" id="CHEBI:29033"/>
        <dbReference type="ChEBI" id="CHEBI:29034"/>
        <dbReference type="ChEBI" id="CHEBI:57379"/>
        <dbReference type="ChEBI" id="CHEBI:61540"/>
    </reaction>
</comment>
<comment type="cofactor">
    <cofactor evidence="1">
        <name>Fe(2+)</name>
        <dbReference type="ChEBI" id="CHEBI:29033"/>
    </cofactor>
    <text evidence="1">Expected to bind 2 Fe(2+) ions per subunit.</text>
</comment>
<comment type="subcellular location">
    <subcellularLocation>
        <location evidence="1">Endoplasmic reticulum membrane</location>
        <topology evidence="1">Multi-pass membrane protein</topology>
    </subcellularLocation>
    <subcellularLocation>
        <location evidence="4 5">Microsome membrane</location>
    </subcellularLocation>
</comment>
<comment type="tissue specificity">
    <text evidence="4">Detected in heart, but not in brain, liver, skin or adipose tissue.</text>
</comment>
<comment type="induction">
    <text evidence="4">Up-regulated by agonists that activate NR1H3. Up-regulated by a fat-free high-carbohydrate diet. Not down-regulated by a high-carbohydrate diet supplemented with unsaturated fatty acids. Down-regulated by leptin.</text>
</comment>
<comment type="domain">
    <text evidence="1">The histidine box domains are involved in binding the catalytic metal ions.</text>
</comment>
<comment type="similarity">
    <text evidence="2">Belongs to the fatty acid desaturase type 1 family.</text>
</comment>
<proteinExistence type="evidence at protein level"/>
<name>SCD4_MOUSE</name>
<accession>Q6T707</accession>
<accession>B9EIY5</accession>
<keyword id="KW-0256">Endoplasmic reticulum</keyword>
<keyword id="KW-0275">Fatty acid biosynthesis</keyword>
<keyword id="KW-0276">Fatty acid metabolism</keyword>
<keyword id="KW-0408">Iron</keyword>
<keyword id="KW-0444">Lipid biosynthesis</keyword>
<keyword id="KW-0443">Lipid metabolism</keyword>
<keyword id="KW-0472">Membrane</keyword>
<keyword id="KW-0479">Metal-binding</keyword>
<keyword id="KW-0492">Microsome</keyword>
<keyword id="KW-0560">Oxidoreductase</keyword>
<keyword id="KW-1185">Reference proteome</keyword>
<keyword id="KW-0812">Transmembrane</keyword>
<keyword id="KW-1133">Transmembrane helix</keyword>
<organism>
    <name type="scientific">Mus musculus</name>
    <name type="common">Mouse</name>
    <dbReference type="NCBI Taxonomy" id="10090"/>
    <lineage>
        <taxon>Eukaryota</taxon>
        <taxon>Metazoa</taxon>
        <taxon>Chordata</taxon>
        <taxon>Craniata</taxon>
        <taxon>Vertebrata</taxon>
        <taxon>Euteleostomi</taxon>
        <taxon>Mammalia</taxon>
        <taxon>Eutheria</taxon>
        <taxon>Euarchontoglires</taxon>
        <taxon>Glires</taxon>
        <taxon>Rodentia</taxon>
        <taxon>Myomorpha</taxon>
        <taxon>Muroidea</taxon>
        <taxon>Muridae</taxon>
        <taxon>Murinae</taxon>
        <taxon>Mus</taxon>
        <taxon>Mus</taxon>
    </lineage>
</organism>
<sequence>MTAHLPQEISSRCSTTNIMEPHSRRQQDGEEKMPLQAEDIRPEIKDDLYDPSYQDEEGPPPKLEYVWRNIIFMALLHVGALYGITLVPSCKVYTWLLGVFYNVVAGLGITAGAHRLWSHRTYKARLPLRIFLIMANTMAFQNDVYEWARDHRAHHKFSETHADPHNSRRGFFFSHVGWLLVRKHPAVKEKGKNLDMSDLKAEKLVMFQRRYYKLAVTLMFIILPTLVPWYLWGETFQHSLCVSNFLRYAVLLNFTWLVNSAAHLYGYRPYDRGIGARENPFVSMASLGEGFHNYHHTFPYDYSVSEYRWHINFTTFFIDCMAALGLAYDRKKVSKAVVLARIKRTGDGSHKSS</sequence>
<gene>
    <name evidence="10" type="primary">Scd4</name>
</gene>
<protein>
    <recommendedName>
        <fullName evidence="6">Stearoyl-CoA desaturase 4</fullName>
        <ecNumber evidence="4 5">1.14.19.1</ecNumber>
    </recommendedName>
    <alternativeName>
        <fullName evidence="8">Acyl-CoA desaturase 4</fullName>
    </alternativeName>
    <alternativeName>
        <fullName evidence="7">Delta(9)-desaturase 4</fullName>
        <shortName evidence="7">Delta-9 desaturase 4</shortName>
    </alternativeName>
    <alternativeName>
        <fullName evidence="8">Fatty acid desaturase 4</fullName>
    </alternativeName>
</protein>
<reference evidence="9" key="1">
    <citation type="journal article" date="2003" name="J. Biol. Chem.">
        <title>Identification and characterization of murine SCD4, a novel heart-specific stearoyl-CoA desaturase isoform regulated by leptin and dietary factors.</title>
        <authorList>
            <person name="Miyazaki M."/>
            <person name="Jacobson M.J."/>
            <person name="Man W.C."/>
            <person name="Cohen P."/>
            <person name="Asilmaz E."/>
            <person name="Friedman J.M."/>
            <person name="Ntambi J.M."/>
        </authorList>
    </citation>
    <scope>NUCLEOTIDE SEQUENCE [MRNA]</scope>
    <scope>CATALYTIC ACTIVITY</scope>
    <scope>FUNCTION</scope>
    <scope>SUBCELLULAR LOCATION</scope>
    <scope>TISSUE SPECIFICITY</scope>
    <scope>INDUCTION BY NR1H3 AGONISTS; FAT-FREE HIGH-CARBOHYDRATE DIET AND LEPTIN</scope>
    <source>
        <strain evidence="9">C57BL/6J</strain>
    </source>
</reference>
<reference evidence="11" key="2">
    <citation type="journal article" date="2009" name="PLoS Biol.">
        <title>Lineage-specific biology revealed by a finished genome assembly of the mouse.</title>
        <authorList>
            <person name="Church D.M."/>
            <person name="Goodstadt L."/>
            <person name="Hillier L.W."/>
            <person name="Zody M.C."/>
            <person name="Goldstein S."/>
            <person name="She X."/>
            <person name="Bult C.J."/>
            <person name="Agarwala R."/>
            <person name="Cherry J.L."/>
            <person name="DiCuccio M."/>
            <person name="Hlavina W."/>
            <person name="Kapustin Y."/>
            <person name="Meric P."/>
            <person name="Maglott D."/>
            <person name="Birtle Z."/>
            <person name="Marques A.C."/>
            <person name="Graves T."/>
            <person name="Zhou S."/>
            <person name="Teague B."/>
            <person name="Potamousis K."/>
            <person name="Churas C."/>
            <person name="Place M."/>
            <person name="Herschleb J."/>
            <person name="Runnheim R."/>
            <person name="Forrest D."/>
            <person name="Amos-Landgraf J."/>
            <person name="Schwartz D.C."/>
            <person name="Cheng Z."/>
            <person name="Lindblad-Toh K."/>
            <person name="Eichler E.E."/>
            <person name="Ponting C.P."/>
        </authorList>
    </citation>
    <scope>NUCLEOTIDE SEQUENCE [LARGE SCALE GENOMIC DNA]</scope>
    <source>
        <strain evidence="11">C57BL/6J</strain>
    </source>
</reference>
<reference key="3">
    <citation type="submission" date="2005-07" db="EMBL/GenBank/DDBJ databases">
        <authorList>
            <person name="Mural R.J."/>
            <person name="Adams M.D."/>
            <person name="Myers E.W."/>
            <person name="Smith H.O."/>
            <person name="Venter J.C."/>
        </authorList>
    </citation>
    <scope>NUCLEOTIDE SEQUENCE [LARGE SCALE GENOMIC DNA]</scope>
</reference>
<reference key="4">
    <citation type="journal article" date="2004" name="Genome Res.">
        <title>The status, quality, and expansion of the NIH full-length cDNA project: the Mammalian Gene Collection (MGC).</title>
        <authorList>
            <consortium name="The MGC Project Team"/>
        </authorList>
    </citation>
    <scope>NUCLEOTIDE SEQUENCE [LARGE SCALE MRNA]</scope>
</reference>
<reference key="5">
    <citation type="journal article" date="2005" name="Proc. Natl. Acad. Sci. U.S.A.">
        <title>Stearoyl-CoA desaturase-2 gene expression is required for lipid synthesis during early skin and liver development.</title>
        <authorList>
            <person name="Miyazaki M."/>
            <person name="Dobrzyn A."/>
            <person name="Elias P.M."/>
            <person name="Ntambi J.M."/>
        </authorList>
    </citation>
    <scope>TISSUE SPECIFICITY</scope>
</reference>
<reference key="6">
    <citation type="journal article" date="2006" name="J. Lipid Res.">
        <title>Identification of mouse palmitoyl-coenzyme A Delta9-desaturase.</title>
        <authorList>
            <person name="Miyazaki M."/>
            <person name="Bruggink S.M."/>
            <person name="Ntambi J.M."/>
        </authorList>
    </citation>
    <scope>FUNCTION</scope>
    <scope>CATALYTIC ACTIVITY</scope>
    <scope>SUBCELLULAR LOCATION</scope>
</reference>
<dbReference type="EC" id="1.14.19.1" evidence="4 5"/>
<dbReference type="EMBL" id="AY430080">
    <property type="protein sequence ID" value="AAR06950.1"/>
    <property type="molecule type" value="mRNA"/>
</dbReference>
<dbReference type="EMBL" id="AC123853">
    <property type="status" value="NOT_ANNOTATED_CDS"/>
    <property type="molecule type" value="Genomic_DNA"/>
</dbReference>
<dbReference type="EMBL" id="CH466534">
    <property type="protein sequence ID" value="EDL41929.1"/>
    <property type="molecule type" value="Genomic_DNA"/>
</dbReference>
<dbReference type="EMBL" id="BC141234">
    <property type="protein sequence ID" value="AAI41235.1"/>
    <property type="molecule type" value="mRNA"/>
</dbReference>
<dbReference type="CCDS" id="CCDS29849.1"/>
<dbReference type="RefSeq" id="NP_899039.2">
    <property type="nucleotide sequence ID" value="NM_183216.3"/>
</dbReference>
<dbReference type="SMR" id="Q6T707"/>
<dbReference type="FunCoup" id="Q6T707">
    <property type="interactions" value="662"/>
</dbReference>
<dbReference type="STRING" id="10090.ENSMUSP00000059860"/>
<dbReference type="SwissLipids" id="SLP:000001657"/>
<dbReference type="iPTMnet" id="Q6T707"/>
<dbReference type="PhosphoSitePlus" id="Q6T707"/>
<dbReference type="SwissPalm" id="Q6T707"/>
<dbReference type="jPOST" id="Q6T707"/>
<dbReference type="PaxDb" id="10090-ENSMUSP00000059860"/>
<dbReference type="ProteomicsDB" id="256711"/>
<dbReference type="DNASU" id="329065"/>
<dbReference type="Ensembl" id="ENSMUST00000058856.9">
    <property type="protein sequence ID" value="ENSMUSP00000059860.9"/>
    <property type="gene ID" value="ENSMUSG00000050195.9"/>
</dbReference>
<dbReference type="GeneID" id="329065"/>
<dbReference type="KEGG" id="mmu:329065"/>
<dbReference type="UCSC" id="uc008hpq.1">
    <property type="organism name" value="mouse"/>
</dbReference>
<dbReference type="AGR" id="MGI:2670997"/>
<dbReference type="CTD" id="329065"/>
<dbReference type="MGI" id="MGI:2670997">
    <property type="gene designation" value="Scd4"/>
</dbReference>
<dbReference type="VEuPathDB" id="HostDB:ENSMUSG00000050195"/>
<dbReference type="eggNOG" id="KOG1600">
    <property type="taxonomic scope" value="Eukaryota"/>
</dbReference>
<dbReference type="GeneTree" id="ENSGT00940000154908"/>
<dbReference type="HOGENOM" id="CLU_027359_0_0_1"/>
<dbReference type="InParanoid" id="Q6T707"/>
<dbReference type="OMA" id="WHISFTT"/>
<dbReference type="OrthoDB" id="10260134at2759"/>
<dbReference type="PhylomeDB" id="Q6T707"/>
<dbReference type="TreeFam" id="TF313251"/>
<dbReference type="BRENDA" id="1.14.19.1">
    <property type="organism ID" value="3474"/>
</dbReference>
<dbReference type="BioGRID-ORCS" id="329065">
    <property type="hits" value="4 hits in 78 CRISPR screens"/>
</dbReference>
<dbReference type="PRO" id="PR:Q6T707"/>
<dbReference type="Proteomes" id="UP000000589">
    <property type="component" value="Chromosome 19"/>
</dbReference>
<dbReference type="RNAct" id="Q6T707">
    <property type="molecule type" value="protein"/>
</dbReference>
<dbReference type="Bgee" id="ENSMUSG00000050195">
    <property type="expression patterns" value="Expressed in lip and 28 other cell types or tissues"/>
</dbReference>
<dbReference type="GO" id="GO:0005789">
    <property type="term" value="C:endoplasmic reticulum membrane"/>
    <property type="evidence" value="ECO:0000304"/>
    <property type="project" value="Reactome"/>
</dbReference>
<dbReference type="GO" id="GO:0016020">
    <property type="term" value="C:membrane"/>
    <property type="evidence" value="ECO:0000314"/>
    <property type="project" value="UniProtKB"/>
</dbReference>
<dbReference type="GO" id="GO:0046872">
    <property type="term" value="F:metal ion binding"/>
    <property type="evidence" value="ECO:0007669"/>
    <property type="project" value="UniProtKB-KW"/>
</dbReference>
<dbReference type="GO" id="GO:0032896">
    <property type="term" value="F:palmitoyl-CoA 9-desaturase activity"/>
    <property type="evidence" value="ECO:0000314"/>
    <property type="project" value="MGI"/>
</dbReference>
<dbReference type="GO" id="GO:0004768">
    <property type="term" value="F:stearoyl-CoA 9-desaturase activity"/>
    <property type="evidence" value="ECO:0000314"/>
    <property type="project" value="MGI"/>
</dbReference>
<dbReference type="GO" id="GO:0031670">
    <property type="term" value="P:cellular response to nutrient"/>
    <property type="evidence" value="ECO:0000314"/>
    <property type="project" value="UniProtKB"/>
</dbReference>
<dbReference type="GO" id="GO:0006633">
    <property type="term" value="P:fatty acid biosynthetic process"/>
    <property type="evidence" value="ECO:0000314"/>
    <property type="project" value="MGI"/>
</dbReference>
<dbReference type="GO" id="GO:1903966">
    <property type="term" value="P:monounsaturated fatty acid biosynthetic process"/>
    <property type="evidence" value="ECO:0000314"/>
    <property type="project" value="UniProtKB"/>
</dbReference>
<dbReference type="CDD" id="cd03505">
    <property type="entry name" value="Delta9-FADS-like"/>
    <property type="match status" value="1"/>
</dbReference>
<dbReference type="InterPro" id="IPR015876">
    <property type="entry name" value="Acyl-CoA_DS"/>
</dbReference>
<dbReference type="InterPro" id="IPR005804">
    <property type="entry name" value="FA_desaturase_dom"/>
</dbReference>
<dbReference type="InterPro" id="IPR001522">
    <property type="entry name" value="FADS-1_CS"/>
</dbReference>
<dbReference type="PANTHER" id="PTHR11351">
    <property type="entry name" value="ACYL-COA DESATURASE"/>
    <property type="match status" value="1"/>
</dbReference>
<dbReference type="PANTHER" id="PTHR11351:SF20">
    <property type="entry name" value="STEAROYL-COA DESATURASE 4"/>
    <property type="match status" value="1"/>
</dbReference>
<dbReference type="Pfam" id="PF00487">
    <property type="entry name" value="FA_desaturase"/>
    <property type="match status" value="1"/>
</dbReference>
<dbReference type="PRINTS" id="PR00075">
    <property type="entry name" value="FACDDSATRASE"/>
</dbReference>
<dbReference type="PROSITE" id="PS00476">
    <property type="entry name" value="FATTY_ACID_DESATUR_1"/>
    <property type="match status" value="1"/>
</dbReference>
<evidence type="ECO:0000250" key="1">
    <source>
        <dbReference type="UniProtKB" id="O00767"/>
    </source>
</evidence>
<evidence type="ECO:0000255" key="2">
    <source>
        <dbReference type="RuleBase" id="RU000581"/>
    </source>
</evidence>
<evidence type="ECO:0000256" key="3">
    <source>
        <dbReference type="SAM" id="MobiDB-lite"/>
    </source>
</evidence>
<evidence type="ECO:0000269" key="4">
    <source>
    </source>
</evidence>
<evidence type="ECO:0000269" key="5">
    <source>
    </source>
</evidence>
<evidence type="ECO:0000303" key="6">
    <source>
    </source>
</evidence>
<evidence type="ECO:0000303" key="7">
    <source>
    </source>
</evidence>
<evidence type="ECO:0000305" key="8"/>
<evidence type="ECO:0000312" key="9">
    <source>
        <dbReference type="EMBL" id="AAR06950.1"/>
    </source>
</evidence>
<evidence type="ECO:0000312" key="10">
    <source>
        <dbReference type="MGI" id="MGI:2670997"/>
    </source>
</evidence>
<evidence type="ECO:0000312" key="11">
    <source>
        <dbReference type="Proteomes" id="UP000000589"/>
    </source>
</evidence>
<feature type="chain" id="PRO_0000433872" description="Stearoyl-CoA desaturase 4">
    <location>
        <begin position="1"/>
        <end position="353"/>
    </location>
</feature>
<feature type="topological domain" description="Cytoplasmic" evidence="1">
    <location>
        <begin position="1"/>
        <end position="66"/>
    </location>
</feature>
<feature type="transmembrane region" description="Helical" evidence="1">
    <location>
        <begin position="67"/>
        <end position="87"/>
    </location>
</feature>
<feature type="topological domain" description="Lumenal" evidence="1">
    <location>
        <begin position="88"/>
        <end position="91"/>
    </location>
</feature>
<feature type="transmembrane region" description="Helical" evidence="1">
    <location>
        <begin position="92"/>
        <end position="112"/>
    </location>
</feature>
<feature type="topological domain" description="Cytoplasmic" evidence="1">
    <location>
        <begin position="113"/>
        <end position="211"/>
    </location>
</feature>
<feature type="transmembrane region" description="Helical" evidence="1">
    <location>
        <begin position="212"/>
        <end position="231"/>
    </location>
</feature>
<feature type="topological domain" description="Lumenal" evidence="1">
    <location>
        <begin position="232"/>
        <end position="235"/>
    </location>
</feature>
<feature type="transmembrane region" description="Helical" evidence="1">
    <location>
        <begin position="236"/>
        <end position="257"/>
    </location>
</feature>
<feature type="topological domain" description="Cytoplasmic" evidence="1 8">
    <location>
        <begin position="258"/>
        <end position="353"/>
    </location>
</feature>
<feature type="region of interest" description="Disordered" evidence="3">
    <location>
        <begin position="1"/>
        <end position="42"/>
    </location>
</feature>
<feature type="short sequence motif" description="Histidine box-1" evidence="8">
    <location>
        <begin position="114"/>
        <end position="119"/>
    </location>
</feature>
<feature type="short sequence motif" description="Histidine box-2" evidence="8">
    <location>
        <begin position="151"/>
        <end position="155"/>
    </location>
</feature>
<feature type="short sequence motif" description="Histidine box-3" evidence="8">
    <location>
        <begin position="292"/>
        <end position="296"/>
    </location>
</feature>
<feature type="compositionally biased region" description="Polar residues" evidence="3">
    <location>
        <begin position="8"/>
        <end position="18"/>
    </location>
</feature>
<feature type="compositionally biased region" description="Basic and acidic residues" evidence="3">
    <location>
        <begin position="21"/>
        <end position="42"/>
    </location>
</feature>
<feature type="binding site" evidence="1">
    <location>
        <position position="69"/>
    </location>
    <ligand>
        <name>substrate</name>
    </ligand>
</feature>
<feature type="binding site" evidence="1">
    <location>
        <position position="114"/>
    </location>
    <ligand>
        <name>Fe cation</name>
        <dbReference type="ChEBI" id="CHEBI:24875"/>
        <label>1</label>
    </ligand>
</feature>
<feature type="binding site" evidence="1">
    <location>
        <position position="119"/>
    </location>
    <ligand>
        <name>Fe cation</name>
        <dbReference type="ChEBI" id="CHEBI:24875"/>
        <label>1</label>
    </ligand>
</feature>
<feature type="binding site" evidence="1">
    <location>
        <position position="142"/>
    </location>
    <ligand>
        <name>substrate</name>
    </ligand>
</feature>
<feature type="binding site" evidence="1">
    <location>
        <position position="149"/>
    </location>
    <ligand>
        <name>substrate</name>
    </ligand>
</feature>
<feature type="binding site" evidence="1">
    <location>
        <position position="150"/>
    </location>
    <ligand>
        <name>substrate</name>
    </ligand>
</feature>
<feature type="binding site" evidence="1">
    <location>
        <position position="151"/>
    </location>
    <ligand>
        <name>Fe cation</name>
        <dbReference type="ChEBI" id="CHEBI:24875"/>
        <label>1</label>
    </ligand>
</feature>
<feature type="binding site" evidence="1">
    <location>
        <position position="154"/>
    </location>
    <ligand>
        <name>Fe cation</name>
        <dbReference type="ChEBI" id="CHEBI:24875"/>
        <label>2</label>
    </ligand>
</feature>
<feature type="binding site" evidence="1">
    <location>
        <position position="155"/>
    </location>
    <ligand>
        <name>Fe cation</name>
        <dbReference type="ChEBI" id="CHEBI:24875"/>
        <label>1</label>
    </ligand>
</feature>
<feature type="binding site" evidence="1">
    <location>
        <position position="182"/>
    </location>
    <ligand>
        <name>substrate</name>
    </ligand>
</feature>
<feature type="binding site" evidence="1">
    <location>
        <position position="183"/>
    </location>
    <ligand>
        <name>substrate</name>
    </ligand>
</feature>
<feature type="binding site" evidence="1">
    <location>
        <position position="256"/>
    </location>
    <ligand>
        <name>substrate</name>
    </ligand>
</feature>
<feature type="binding site" evidence="1">
    <location>
        <position position="263"/>
    </location>
    <ligand>
        <name>Fe cation</name>
        <dbReference type="ChEBI" id="CHEBI:24875"/>
        <label>2</label>
    </ligand>
</feature>
<feature type="binding site" evidence="1">
    <location>
        <position position="292"/>
    </location>
    <ligand>
        <name>Fe cation</name>
        <dbReference type="ChEBI" id="CHEBI:24875"/>
        <label>2</label>
    </ligand>
</feature>
<feature type="binding site" evidence="1">
    <location>
        <position position="295"/>
    </location>
    <ligand>
        <name>Fe cation</name>
        <dbReference type="ChEBI" id="CHEBI:24875"/>
        <label>1</label>
    </ligand>
</feature>
<feature type="binding site" evidence="1">
    <location>
        <position position="296"/>
    </location>
    <ligand>
        <name>Fe cation</name>
        <dbReference type="ChEBI" id="CHEBI:24875"/>
        <label>2</label>
    </ligand>
</feature>
<feature type="sequence conflict" description="In Ref. 3; EDL41929 and 4; AAI41235." evidence="8" ref="3 4">
    <original>N</original>
    <variation>S</variation>
    <location>
        <position position="193"/>
    </location>
</feature>
<feature type="sequence conflict" description="In Ref. 3; EDL41929 and 4; AAI41235." evidence="8" ref="3 4">
    <original>M</original>
    <variation>T</variation>
    <location>
        <position position="219"/>
    </location>
</feature>